<reference key="1">
    <citation type="journal article" date="2009" name="PLoS Genet.">
        <title>Organised genome dynamics in the Escherichia coli species results in highly diverse adaptive paths.</title>
        <authorList>
            <person name="Touchon M."/>
            <person name="Hoede C."/>
            <person name="Tenaillon O."/>
            <person name="Barbe V."/>
            <person name="Baeriswyl S."/>
            <person name="Bidet P."/>
            <person name="Bingen E."/>
            <person name="Bonacorsi S."/>
            <person name="Bouchier C."/>
            <person name="Bouvet O."/>
            <person name="Calteau A."/>
            <person name="Chiapello H."/>
            <person name="Clermont O."/>
            <person name="Cruveiller S."/>
            <person name="Danchin A."/>
            <person name="Diard M."/>
            <person name="Dossat C."/>
            <person name="Karoui M.E."/>
            <person name="Frapy E."/>
            <person name="Garry L."/>
            <person name="Ghigo J.M."/>
            <person name="Gilles A.M."/>
            <person name="Johnson J."/>
            <person name="Le Bouguenec C."/>
            <person name="Lescat M."/>
            <person name="Mangenot S."/>
            <person name="Martinez-Jehanne V."/>
            <person name="Matic I."/>
            <person name="Nassif X."/>
            <person name="Oztas S."/>
            <person name="Petit M.A."/>
            <person name="Pichon C."/>
            <person name="Rouy Z."/>
            <person name="Ruf C.S."/>
            <person name="Schneider D."/>
            <person name="Tourret J."/>
            <person name="Vacherie B."/>
            <person name="Vallenet D."/>
            <person name="Medigue C."/>
            <person name="Rocha E.P.C."/>
            <person name="Denamur E."/>
        </authorList>
    </citation>
    <scope>NUCLEOTIDE SEQUENCE [LARGE SCALE GENOMIC DNA]</scope>
    <source>
        <strain>UMN026 / ExPEC</strain>
    </source>
</reference>
<comment type="catalytic activity">
    <reaction evidence="1">
        <text>tRNA(Gln) + L-glutamine + ATP = L-glutaminyl-tRNA(Gln) + AMP + diphosphate</text>
        <dbReference type="Rhea" id="RHEA:20121"/>
        <dbReference type="Rhea" id="RHEA-COMP:9662"/>
        <dbReference type="Rhea" id="RHEA-COMP:9681"/>
        <dbReference type="ChEBI" id="CHEBI:30616"/>
        <dbReference type="ChEBI" id="CHEBI:33019"/>
        <dbReference type="ChEBI" id="CHEBI:58359"/>
        <dbReference type="ChEBI" id="CHEBI:78442"/>
        <dbReference type="ChEBI" id="CHEBI:78521"/>
        <dbReference type="ChEBI" id="CHEBI:456215"/>
        <dbReference type="EC" id="6.1.1.18"/>
    </reaction>
</comment>
<comment type="subunit">
    <text evidence="1">Monomer.</text>
</comment>
<comment type="subcellular location">
    <subcellularLocation>
        <location evidence="1">Cytoplasm</location>
    </subcellularLocation>
</comment>
<comment type="similarity">
    <text evidence="1">Belongs to the class-I aminoacyl-tRNA synthetase family.</text>
</comment>
<protein>
    <recommendedName>
        <fullName evidence="1">Glutamine--tRNA ligase</fullName>
        <ecNumber evidence="1">6.1.1.18</ecNumber>
    </recommendedName>
    <alternativeName>
        <fullName evidence="1">Glutaminyl-tRNA synthetase</fullName>
        <shortName evidence="1">GlnRS</shortName>
    </alternativeName>
</protein>
<proteinExistence type="inferred from homology"/>
<accession>B7N9S6</accession>
<feature type="chain" id="PRO_1000199096" description="Glutamine--tRNA ligase">
    <location>
        <begin position="1"/>
        <end position="554"/>
    </location>
</feature>
<feature type="region of interest" description="Interaction with tRNA" evidence="1">
    <location>
        <begin position="317"/>
        <end position="324"/>
    </location>
</feature>
<feature type="short sequence motif" description="'HIGH' region" evidence="1">
    <location>
        <begin position="34"/>
        <end position="44"/>
    </location>
</feature>
<feature type="short sequence motif" description="'KMSKS' region" evidence="1">
    <location>
        <begin position="268"/>
        <end position="272"/>
    </location>
</feature>
<feature type="binding site" evidence="1">
    <location>
        <begin position="35"/>
        <end position="37"/>
    </location>
    <ligand>
        <name>ATP</name>
        <dbReference type="ChEBI" id="CHEBI:30616"/>
    </ligand>
</feature>
<feature type="binding site" evidence="1">
    <location>
        <begin position="41"/>
        <end position="47"/>
    </location>
    <ligand>
        <name>ATP</name>
        <dbReference type="ChEBI" id="CHEBI:30616"/>
    </ligand>
</feature>
<feature type="binding site" evidence="1">
    <location>
        <position position="67"/>
    </location>
    <ligand>
        <name>L-glutamine</name>
        <dbReference type="ChEBI" id="CHEBI:58359"/>
    </ligand>
</feature>
<feature type="binding site" evidence="1">
    <location>
        <position position="212"/>
    </location>
    <ligand>
        <name>L-glutamine</name>
        <dbReference type="ChEBI" id="CHEBI:58359"/>
    </ligand>
</feature>
<feature type="binding site" evidence="1">
    <location>
        <position position="231"/>
    </location>
    <ligand>
        <name>ATP</name>
        <dbReference type="ChEBI" id="CHEBI:30616"/>
    </ligand>
</feature>
<feature type="binding site" evidence="1">
    <location>
        <begin position="261"/>
        <end position="262"/>
    </location>
    <ligand>
        <name>ATP</name>
        <dbReference type="ChEBI" id="CHEBI:30616"/>
    </ligand>
</feature>
<feature type="binding site" evidence="1">
    <location>
        <begin position="269"/>
        <end position="271"/>
    </location>
    <ligand>
        <name>ATP</name>
        <dbReference type="ChEBI" id="CHEBI:30616"/>
    </ligand>
</feature>
<name>SYQ_ECOLU</name>
<sequence>MSEAEARPTNFIRQIIDEDLASGKHTTVHTRFPPEPNGYLHIGHAKSICLNFGIAQDYKGQCNLRFDDTNPVKEDIEYVESIKNDVEWLGFHWSGNVRYSSDYFDQLHAYAIELINKGLAYVDELTPEQIREYRGTLTQPGKNSPYRDRSVEENLALFEKMRTGGFEEGKACLRAKIDMASPFIVMRDPVLYRIKFAEHHQTGNKWCIYPMYDFTHCISDALEGITHSLCTLEFQDNRRLYDWVLDNITIPVHPRQYEFSRLNLEYTVMSKRKLNLLVTDKHVEGWDDPRMPTISGLRRRGYTAASIREFCKRIGVTKQDNTIEMASLESCIREDLNENAPRAMAVIDPVKLVIENYQGEGEMVTMPNHPNKPEMGSRQVPFSGEIWIDRADFREEANKQYKRLVLGKEVRLRNAYVIKAERVEKDAEGNITTIFCTYDADTLSKDPADGRKVKGVIHWVSAAHALPVEIRLYDRLFSVPNPGAADDFLSVINPESLVIKQGFAEPSLKDAVAGKAFQFEREGYFCLDSRHSTAEKPVFNRTVGLRDTWAKVGE</sequence>
<keyword id="KW-0030">Aminoacyl-tRNA synthetase</keyword>
<keyword id="KW-0067">ATP-binding</keyword>
<keyword id="KW-0963">Cytoplasm</keyword>
<keyword id="KW-0436">Ligase</keyword>
<keyword id="KW-0547">Nucleotide-binding</keyword>
<keyword id="KW-0648">Protein biosynthesis</keyword>
<evidence type="ECO:0000255" key="1">
    <source>
        <dbReference type="HAMAP-Rule" id="MF_00126"/>
    </source>
</evidence>
<organism>
    <name type="scientific">Escherichia coli O17:K52:H18 (strain UMN026 / ExPEC)</name>
    <dbReference type="NCBI Taxonomy" id="585056"/>
    <lineage>
        <taxon>Bacteria</taxon>
        <taxon>Pseudomonadati</taxon>
        <taxon>Pseudomonadota</taxon>
        <taxon>Gammaproteobacteria</taxon>
        <taxon>Enterobacterales</taxon>
        <taxon>Enterobacteriaceae</taxon>
        <taxon>Escherichia</taxon>
    </lineage>
</organism>
<dbReference type="EC" id="6.1.1.18" evidence="1"/>
<dbReference type="EMBL" id="CU928163">
    <property type="protein sequence ID" value="CAR11977.1"/>
    <property type="molecule type" value="Genomic_DNA"/>
</dbReference>
<dbReference type="RefSeq" id="WP_001287164.1">
    <property type="nucleotide sequence ID" value="NC_011751.1"/>
</dbReference>
<dbReference type="RefSeq" id="YP_002411523.1">
    <property type="nucleotide sequence ID" value="NC_011751.1"/>
</dbReference>
<dbReference type="SMR" id="B7N9S6"/>
<dbReference type="STRING" id="585056.ECUMN_0765"/>
<dbReference type="GeneID" id="75056538"/>
<dbReference type="KEGG" id="eum:ECUMN_0765"/>
<dbReference type="PATRIC" id="fig|585056.7.peg.968"/>
<dbReference type="HOGENOM" id="CLU_001882_2_3_6"/>
<dbReference type="Proteomes" id="UP000007097">
    <property type="component" value="Chromosome"/>
</dbReference>
<dbReference type="GO" id="GO:0005829">
    <property type="term" value="C:cytosol"/>
    <property type="evidence" value="ECO:0007669"/>
    <property type="project" value="TreeGrafter"/>
</dbReference>
<dbReference type="GO" id="GO:0005524">
    <property type="term" value="F:ATP binding"/>
    <property type="evidence" value="ECO:0007669"/>
    <property type="project" value="UniProtKB-UniRule"/>
</dbReference>
<dbReference type="GO" id="GO:0004819">
    <property type="term" value="F:glutamine-tRNA ligase activity"/>
    <property type="evidence" value="ECO:0007669"/>
    <property type="project" value="UniProtKB-UniRule"/>
</dbReference>
<dbReference type="GO" id="GO:0006425">
    <property type="term" value="P:glutaminyl-tRNA aminoacylation"/>
    <property type="evidence" value="ECO:0007669"/>
    <property type="project" value="InterPro"/>
</dbReference>
<dbReference type="GO" id="GO:0006424">
    <property type="term" value="P:glutamyl-tRNA aminoacylation"/>
    <property type="evidence" value="ECO:0007669"/>
    <property type="project" value="UniProtKB-UniRule"/>
</dbReference>
<dbReference type="CDD" id="cd00807">
    <property type="entry name" value="GlnRS_core"/>
    <property type="match status" value="1"/>
</dbReference>
<dbReference type="FunFam" id="1.10.1160.10:FF:000001">
    <property type="entry name" value="Glutamine--tRNA ligase"/>
    <property type="match status" value="1"/>
</dbReference>
<dbReference type="FunFam" id="2.40.240.10:FF:000001">
    <property type="entry name" value="Glutamine--tRNA ligase"/>
    <property type="match status" value="1"/>
</dbReference>
<dbReference type="FunFam" id="2.40.240.10:FF:000003">
    <property type="entry name" value="Glutamine--tRNA ligase"/>
    <property type="match status" value="1"/>
</dbReference>
<dbReference type="FunFam" id="3.90.800.10:FF:000001">
    <property type="entry name" value="Glutamine--tRNA ligase"/>
    <property type="match status" value="1"/>
</dbReference>
<dbReference type="FunFam" id="3.40.50.620:FF:000037">
    <property type="entry name" value="Glutamine--tRNA ligase cytoplasmic"/>
    <property type="match status" value="1"/>
</dbReference>
<dbReference type="Gene3D" id="1.10.1160.10">
    <property type="entry name" value="Glutamyl-trna Synthetase, Domain 2"/>
    <property type="match status" value="1"/>
</dbReference>
<dbReference type="Gene3D" id="3.90.800.10">
    <property type="entry name" value="Glutamyl-tRNA Synthetase, Domain 3"/>
    <property type="match status" value="1"/>
</dbReference>
<dbReference type="Gene3D" id="3.40.50.620">
    <property type="entry name" value="HUPs"/>
    <property type="match status" value="1"/>
</dbReference>
<dbReference type="Gene3D" id="2.40.240.10">
    <property type="entry name" value="Ribosomal Protein L25, Chain P"/>
    <property type="match status" value="2"/>
</dbReference>
<dbReference type="HAMAP" id="MF_00126">
    <property type="entry name" value="Gln_tRNA_synth"/>
    <property type="match status" value="1"/>
</dbReference>
<dbReference type="InterPro" id="IPR001412">
    <property type="entry name" value="aa-tRNA-synth_I_CS"/>
</dbReference>
<dbReference type="InterPro" id="IPR004514">
    <property type="entry name" value="Gln-tRNA-synth"/>
</dbReference>
<dbReference type="InterPro" id="IPR050132">
    <property type="entry name" value="Gln/Glu-tRNA_Ligase"/>
</dbReference>
<dbReference type="InterPro" id="IPR022861">
    <property type="entry name" value="Gln_tRNA_ligase_bac"/>
</dbReference>
<dbReference type="InterPro" id="IPR000924">
    <property type="entry name" value="Glu/Gln-tRNA-synth"/>
</dbReference>
<dbReference type="InterPro" id="IPR020058">
    <property type="entry name" value="Glu/Gln-tRNA-synth_Ib_cat-dom"/>
</dbReference>
<dbReference type="InterPro" id="IPR020059">
    <property type="entry name" value="Glu/Gln-tRNA-synth_Ib_codon-bd"/>
</dbReference>
<dbReference type="InterPro" id="IPR020061">
    <property type="entry name" value="Glu_tRNA_lig_a-bdl"/>
</dbReference>
<dbReference type="InterPro" id="IPR020056">
    <property type="entry name" value="Rbsml_bL25/Gln-tRNA_synth_N"/>
</dbReference>
<dbReference type="InterPro" id="IPR011035">
    <property type="entry name" value="Ribosomal_bL25/Gln-tRNA_synth"/>
</dbReference>
<dbReference type="InterPro" id="IPR014729">
    <property type="entry name" value="Rossmann-like_a/b/a_fold"/>
</dbReference>
<dbReference type="InterPro" id="IPR049437">
    <property type="entry name" value="tRNA-synt_1c_C2"/>
</dbReference>
<dbReference type="NCBIfam" id="TIGR00440">
    <property type="entry name" value="glnS"/>
    <property type="match status" value="1"/>
</dbReference>
<dbReference type="NCBIfam" id="NF011291">
    <property type="entry name" value="PRK14703.1"/>
    <property type="match status" value="1"/>
</dbReference>
<dbReference type="PANTHER" id="PTHR43097:SF5">
    <property type="entry name" value="GLUTAMATE--TRNA LIGASE"/>
    <property type="match status" value="1"/>
</dbReference>
<dbReference type="PANTHER" id="PTHR43097">
    <property type="entry name" value="GLUTAMINE-TRNA LIGASE"/>
    <property type="match status" value="1"/>
</dbReference>
<dbReference type="Pfam" id="PF00749">
    <property type="entry name" value="tRNA-synt_1c"/>
    <property type="match status" value="1"/>
</dbReference>
<dbReference type="Pfam" id="PF03950">
    <property type="entry name" value="tRNA-synt_1c_C"/>
    <property type="match status" value="1"/>
</dbReference>
<dbReference type="Pfam" id="PF20974">
    <property type="entry name" value="tRNA-synt_1c_C2"/>
    <property type="match status" value="1"/>
</dbReference>
<dbReference type="PRINTS" id="PR00987">
    <property type="entry name" value="TRNASYNTHGLU"/>
</dbReference>
<dbReference type="SUPFAM" id="SSF52374">
    <property type="entry name" value="Nucleotidylyl transferase"/>
    <property type="match status" value="1"/>
</dbReference>
<dbReference type="SUPFAM" id="SSF50715">
    <property type="entry name" value="Ribosomal protein L25-like"/>
    <property type="match status" value="1"/>
</dbReference>
<dbReference type="PROSITE" id="PS00178">
    <property type="entry name" value="AA_TRNA_LIGASE_I"/>
    <property type="match status" value="1"/>
</dbReference>
<gene>
    <name evidence="1" type="primary">glnS</name>
    <name type="ordered locus">ECUMN_0765</name>
</gene>